<sequence>MPELPEVETSRRGIEPHLVGATILHAVVRNGRLRWPVSEEIYRLSDVPVLSVRRRAKYLLLELPDGWIIVHLGMSGSLRILSEELPAEKHDHVDLVMSNGKVLRYTDPRRFGAWLWTRTLEGHPVLAHLGPEPLSDAFNADYLQQKCAKKKTAIKPWLMDNKLVVGVGNIYASESLFSAGIHPDRLASSLSREECEQLVKVIKLVLLRSIEQGGTTLKDFLQSDGKPGYFAQELQVYGRKGEPCRICGMPVVGTKHAQRATFYCRQCQK</sequence>
<feature type="initiator methionine" description="Removed" evidence="1">
    <location>
        <position position="1"/>
    </location>
</feature>
<feature type="chain" id="PRO_1000008707" description="Formamidopyrimidine-DNA glycosylase">
    <location>
        <begin position="2"/>
        <end position="269"/>
    </location>
</feature>
<feature type="zinc finger region" description="FPG-type" evidence="2">
    <location>
        <begin position="235"/>
        <end position="269"/>
    </location>
</feature>
<feature type="active site" description="Schiff-base intermediate with DNA" evidence="2">
    <location>
        <position position="2"/>
    </location>
</feature>
<feature type="active site" description="Proton donor" evidence="2">
    <location>
        <position position="3"/>
    </location>
</feature>
<feature type="active site" description="Proton donor; for beta-elimination activity" evidence="2">
    <location>
        <position position="57"/>
    </location>
</feature>
<feature type="active site" description="Proton donor; for delta-elimination activity" evidence="2">
    <location>
        <position position="259"/>
    </location>
</feature>
<feature type="binding site" evidence="2">
    <location>
        <position position="90"/>
    </location>
    <ligand>
        <name>DNA</name>
        <dbReference type="ChEBI" id="CHEBI:16991"/>
    </ligand>
</feature>
<feature type="binding site" evidence="2">
    <location>
        <position position="109"/>
    </location>
    <ligand>
        <name>DNA</name>
        <dbReference type="ChEBI" id="CHEBI:16991"/>
    </ligand>
</feature>
<feature type="binding site" evidence="2">
    <location>
        <position position="150"/>
    </location>
    <ligand>
        <name>DNA</name>
        <dbReference type="ChEBI" id="CHEBI:16991"/>
    </ligand>
</feature>
<protein>
    <recommendedName>
        <fullName evidence="2">Formamidopyrimidine-DNA glycosylase</fullName>
        <shortName evidence="2">Fapy-DNA glycosylase</shortName>
        <ecNumber evidence="2">3.2.2.23</ecNumber>
    </recommendedName>
    <alternativeName>
        <fullName evidence="2">DNA-(apurinic or apyrimidinic site) lyase MutM</fullName>
        <shortName evidence="2">AP lyase MutM</shortName>
        <ecNumber evidence="2">4.2.99.18</ecNumber>
    </alternativeName>
</protein>
<name>FPG_KLEP7</name>
<keyword id="KW-0227">DNA damage</keyword>
<keyword id="KW-0234">DNA repair</keyword>
<keyword id="KW-0238">DNA-binding</keyword>
<keyword id="KW-0326">Glycosidase</keyword>
<keyword id="KW-0378">Hydrolase</keyword>
<keyword id="KW-0456">Lyase</keyword>
<keyword id="KW-0479">Metal-binding</keyword>
<keyword id="KW-0511">Multifunctional enzyme</keyword>
<keyword id="KW-0862">Zinc</keyword>
<keyword id="KW-0863">Zinc-finger</keyword>
<accession>A6TFM6</accession>
<gene>
    <name evidence="2" type="primary">mutM</name>
    <name evidence="2" type="synonym">fpg</name>
    <name type="ordered locus">KPN78578_39360</name>
    <name type="ORF">KPN_03975</name>
</gene>
<evidence type="ECO:0000250" key="1"/>
<evidence type="ECO:0000255" key="2">
    <source>
        <dbReference type="HAMAP-Rule" id="MF_00103"/>
    </source>
</evidence>
<dbReference type="EC" id="3.2.2.23" evidence="2"/>
<dbReference type="EC" id="4.2.99.18" evidence="2"/>
<dbReference type="EMBL" id="CP000647">
    <property type="protein sequence ID" value="ABR79360.1"/>
    <property type="molecule type" value="Genomic_DNA"/>
</dbReference>
<dbReference type="RefSeq" id="WP_015959138.1">
    <property type="nucleotide sequence ID" value="NC_009648.1"/>
</dbReference>
<dbReference type="SMR" id="A6TFM6"/>
<dbReference type="STRING" id="272620.KPN_03975"/>
<dbReference type="PaxDb" id="272620-KPN_03975"/>
<dbReference type="EnsemblBacteria" id="ABR79360">
    <property type="protein sequence ID" value="ABR79360"/>
    <property type="gene ID" value="KPN_03975"/>
</dbReference>
<dbReference type="KEGG" id="kpn:KPN_03975"/>
<dbReference type="HOGENOM" id="CLU_038423_1_1_6"/>
<dbReference type="Proteomes" id="UP000000265">
    <property type="component" value="Chromosome"/>
</dbReference>
<dbReference type="GO" id="GO:0034039">
    <property type="term" value="F:8-oxo-7,8-dihydroguanine DNA N-glycosylase activity"/>
    <property type="evidence" value="ECO:0007669"/>
    <property type="project" value="TreeGrafter"/>
</dbReference>
<dbReference type="GO" id="GO:0140078">
    <property type="term" value="F:class I DNA-(apurinic or apyrimidinic site) endonuclease activity"/>
    <property type="evidence" value="ECO:0007669"/>
    <property type="project" value="UniProtKB-EC"/>
</dbReference>
<dbReference type="GO" id="GO:0003684">
    <property type="term" value="F:damaged DNA binding"/>
    <property type="evidence" value="ECO:0007669"/>
    <property type="project" value="InterPro"/>
</dbReference>
<dbReference type="GO" id="GO:0008270">
    <property type="term" value="F:zinc ion binding"/>
    <property type="evidence" value="ECO:0007669"/>
    <property type="project" value="UniProtKB-UniRule"/>
</dbReference>
<dbReference type="GO" id="GO:0006284">
    <property type="term" value="P:base-excision repair"/>
    <property type="evidence" value="ECO:0007669"/>
    <property type="project" value="InterPro"/>
</dbReference>
<dbReference type="CDD" id="cd08966">
    <property type="entry name" value="EcFpg-like_N"/>
    <property type="match status" value="1"/>
</dbReference>
<dbReference type="FunFam" id="1.10.8.50:FF:000003">
    <property type="entry name" value="Formamidopyrimidine-DNA glycosylase"/>
    <property type="match status" value="1"/>
</dbReference>
<dbReference type="FunFam" id="3.20.190.10:FF:000001">
    <property type="entry name" value="Formamidopyrimidine-DNA glycosylase"/>
    <property type="match status" value="1"/>
</dbReference>
<dbReference type="Gene3D" id="1.10.8.50">
    <property type="match status" value="1"/>
</dbReference>
<dbReference type="Gene3D" id="3.20.190.10">
    <property type="entry name" value="MutM-like, N-terminal"/>
    <property type="match status" value="1"/>
</dbReference>
<dbReference type="HAMAP" id="MF_00103">
    <property type="entry name" value="Fapy_DNA_glycosyl"/>
    <property type="match status" value="1"/>
</dbReference>
<dbReference type="InterPro" id="IPR015886">
    <property type="entry name" value="DNA_glyclase/AP_lyase_DNA-bd"/>
</dbReference>
<dbReference type="InterPro" id="IPR015887">
    <property type="entry name" value="DNA_glyclase_Znf_dom_DNA_BS"/>
</dbReference>
<dbReference type="InterPro" id="IPR020629">
    <property type="entry name" value="Formamido-pyr_DNA_Glyclase"/>
</dbReference>
<dbReference type="InterPro" id="IPR012319">
    <property type="entry name" value="FPG_cat"/>
</dbReference>
<dbReference type="InterPro" id="IPR035937">
    <property type="entry name" value="MutM-like_N-ter"/>
</dbReference>
<dbReference type="InterPro" id="IPR010979">
    <property type="entry name" value="Ribosomal_uS13-like_H2TH"/>
</dbReference>
<dbReference type="InterPro" id="IPR000214">
    <property type="entry name" value="Znf_DNA_glyclase/AP_lyase"/>
</dbReference>
<dbReference type="InterPro" id="IPR010663">
    <property type="entry name" value="Znf_FPG/IleRS"/>
</dbReference>
<dbReference type="NCBIfam" id="TIGR00577">
    <property type="entry name" value="fpg"/>
    <property type="match status" value="1"/>
</dbReference>
<dbReference type="NCBIfam" id="NF002211">
    <property type="entry name" value="PRK01103.1"/>
    <property type="match status" value="1"/>
</dbReference>
<dbReference type="PANTHER" id="PTHR22993">
    <property type="entry name" value="FORMAMIDOPYRIMIDINE-DNA GLYCOSYLASE"/>
    <property type="match status" value="1"/>
</dbReference>
<dbReference type="PANTHER" id="PTHR22993:SF9">
    <property type="entry name" value="FORMAMIDOPYRIMIDINE-DNA GLYCOSYLASE"/>
    <property type="match status" value="1"/>
</dbReference>
<dbReference type="Pfam" id="PF01149">
    <property type="entry name" value="Fapy_DNA_glyco"/>
    <property type="match status" value="1"/>
</dbReference>
<dbReference type="Pfam" id="PF06831">
    <property type="entry name" value="H2TH"/>
    <property type="match status" value="1"/>
</dbReference>
<dbReference type="Pfam" id="PF06827">
    <property type="entry name" value="zf-FPG_IleRS"/>
    <property type="match status" value="1"/>
</dbReference>
<dbReference type="SMART" id="SM00898">
    <property type="entry name" value="Fapy_DNA_glyco"/>
    <property type="match status" value="1"/>
</dbReference>
<dbReference type="SMART" id="SM01232">
    <property type="entry name" value="H2TH"/>
    <property type="match status" value="1"/>
</dbReference>
<dbReference type="SUPFAM" id="SSF57716">
    <property type="entry name" value="Glucocorticoid receptor-like (DNA-binding domain)"/>
    <property type="match status" value="1"/>
</dbReference>
<dbReference type="SUPFAM" id="SSF81624">
    <property type="entry name" value="N-terminal domain of MutM-like DNA repair proteins"/>
    <property type="match status" value="1"/>
</dbReference>
<dbReference type="SUPFAM" id="SSF46946">
    <property type="entry name" value="S13-like H2TH domain"/>
    <property type="match status" value="1"/>
</dbReference>
<dbReference type="PROSITE" id="PS51068">
    <property type="entry name" value="FPG_CAT"/>
    <property type="match status" value="1"/>
</dbReference>
<dbReference type="PROSITE" id="PS01242">
    <property type="entry name" value="ZF_FPG_1"/>
    <property type="match status" value="1"/>
</dbReference>
<dbReference type="PROSITE" id="PS51066">
    <property type="entry name" value="ZF_FPG_2"/>
    <property type="match status" value="1"/>
</dbReference>
<comment type="function">
    <text evidence="2">Involved in base excision repair of DNA damaged by oxidation or by mutagenic agents. Acts as a DNA glycosylase that recognizes and removes damaged bases. Has a preference for oxidized purines, such as 7,8-dihydro-8-oxoguanine (8-oxoG). Has AP (apurinic/apyrimidinic) lyase activity and introduces nicks in the DNA strand. Cleaves the DNA backbone by beta-delta elimination to generate a single-strand break at the site of the removed base with both 3'- and 5'-phosphates.</text>
</comment>
<comment type="catalytic activity">
    <reaction evidence="2">
        <text>Hydrolysis of DNA containing ring-opened 7-methylguanine residues, releasing 2,6-diamino-4-hydroxy-5-(N-methyl)formamidopyrimidine.</text>
        <dbReference type="EC" id="3.2.2.23"/>
    </reaction>
</comment>
<comment type="catalytic activity">
    <reaction evidence="2">
        <text>2'-deoxyribonucleotide-(2'-deoxyribose 5'-phosphate)-2'-deoxyribonucleotide-DNA = a 3'-end 2'-deoxyribonucleotide-(2,3-dehydro-2,3-deoxyribose 5'-phosphate)-DNA + a 5'-end 5'-phospho-2'-deoxyribonucleoside-DNA + H(+)</text>
        <dbReference type="Rhea" id="RHEA:66592"/>
        <dbReference type="Rhea" id="RHEA-COMP:13180"/>
        <dbReference type="Rhea" id="RHEA-COMP:16897"/>
        <dbReference type="Rhea" id="RHEA-COMP:17067"/>
        <dbReference type="ChEBI" id="CHEBI:15378"/>
        <dbReference type="ChEBI" id="CHEBI:136412"/>
        <dbReference type="ChEBI" id="CHEBI:157695"/>
        <dbReference type="ChEBI" id="CHEBI:167181"/>
        <dbReference type="EC" id="4.2.99.18"/>
    </reaction>
</comment>
<comment type="cofactor">
    <cofactor evidence="2">
        <name>Zn(2+)</name>
        <dbReference type="ChEBI" id="CHEBI:29105"/>
    </cofactor>
    <text evidence="2">Binds 1 zinc ion per subunit.</text>
</comment>
<comment type="subunit">
    <text evidence="2">Monomer.</text>
</comment>
<comment type="similarity">
    <text evidence="2">Belongs to the FPG family.</text>
</comment>
<proteinExistence type="inferred from homology"/>
<organism>
    <name type="scientific">Klebsiella pneumoniae subsp. pneumoniae (strain ATCC 700721 / MGH 78578)</name>
    <dbReference type="NCBI Taxonomy" id="272620"/>
    <lineage>
        <taxon>Bacteria</taxon>
        <taxon>Pseudomonadati</taxon>
        <taxon>Pseudomonadota</taxon>
        <taxon>Gammaproteobacteria</taxon>
        <taxon>Enterobacterales</taxon>
        <taxon>Enterobacteriaceae</taxon>
        <taxon>Klebsiella/Raoultella group</taxon>
        <taxon>Klebsiella</taxon>
        <taxon>Klebsiella pneumoniae complex</taxon>
    </lineage>
</organism>
<reference key="1">
    <citation type="submission" date="2006-09" db="EMBL/GenBank/DDBJ databases">
        <authorList>
            <consortium name="The Klebsiella pneumonia Genome Sequencing Project"/>
            <person name="McClelland M."/>
            <person name="Sanderson E.K."/>
            <person name="Spieth J."/>
            <person name="Clifton W.S."/>
            <person name="Latreille P."/>
            <person name="Sabo A."/>
            <person name="Pepin K."/>
            <person name="Bhonagiri V."/>
            <person name="Porwollik S."/>
            <person name="Ali J."/>
            <person name="Wilson R.K."/>
        </authorList>
    </citation>
    <scope>NUCLEOTIDE SEQUENCE [LARGE SCALE GENOMIC DNA]</scope>
    <source>
        <strain>ATCC 700721 / MGH 78578</strain>
    </source>
</reference>